<sequence length="274" mass="30262">MKKTAIALLAWFVSSASLAATPWQKITHPVPGAAQSIGSFANGCIIGADTLPVQSDNYQVMRTDQRRYFGHPDLVMFIQRLSHQAQQRGLGTVLIGDMGMPAGGRFNGGHASHQTGLDVDIFLQLPKTRWSQAQLLRPQALDLVSRDGKHVVPSRWSSDIASLIKLAAQDNDVTRIFVNPAIKQQLCLDAGNDRDWLRKVRPWFQHRAHMHVRLRCPADSLECEDQPLPPPGDGCGAELQSWFEPPKPGTTKPEKKTPPPLPPSCQALLDEHVL</sequence>
<protein>
    <recommendedName>
        <fullName evidence="1">Penicillin-insensitive murein endopeptidase</fullName>
        <ecNumber evidence="1">3.4.24.-</ecNumber>
    </recommendedName>
    <alternativeName>
        <fullName evidence="1">D-alanyl-D-alanine-endopeptidase</fullName>
        <shortName evidence="1">DD-endopeptidase</shortName>
    </alternativeName>
</protein>
<accession>B5R3R4</accession>
<dbReference type="EC" id="3.4.24.-" evidence="1"/>
<dbReference type="EMBL" id="AM933172">
    <property type="protein sequence ID" value="CAR33949.1"/>
    <property type="molecule type" value="Genomic_DNA"/>
</dbReference>
<dbReference type="RefSeq" id="WP_000750428.1">
    <property type="nucleotide sequence ID" value="NC_011294.1"/>
</dbReference>
<dbReference type="SMR" id="B5R3R4"/>
<dbReference type="MEROPS" id="M74.001"/>
<dbReference type="KEGG" id="set:SEN2365"/>
<dbReference type="HOGENOM" id="CLU_052496_0_0_6"/>
<dbReference type="Proteomes" id="UP000000613">
    <property type="component" value="Chromosome"/>
</dbReference>
<dbReference type="GO" id="GO:0030288">
    <property type="term" value="C:outer membrane-bounded periplasmic space"/>
    <property type="evidence" value="ECO:0007669"/>
    <property type="project" value="InterPro"/>
</dbReference>
<dbReference type="GO" id="GO:0046872">
    <property type="term" value="F:metal ion binding"/>
    <property type="evidence" value="ECO:0007669"/>
    <property type="project" value="UniProtKB-KW"/>
</dbReference>
<dbReference type="GO" id="GO:0004222">
    <property type="term" value="F:metalloendopeptidase activity"/>
    <property type="evidence" value="ECO:0007669"/>
    <property type="project" value="UniProtKB-UniRule"/>
</dbReference>
<dbReference type="GO" id="GO:0004252">
    <property type="term" value="F:serine-type endopeptidase activity"/>
    <property type="evidence" value="ECO:0007669"/>
    <property type="project" value="InterPro"/>
</dbReference>
<dbReference type="GO" id="GO:0000270">
    <property type="term" value="P:peptidoglycan metabolic process"/>
    <property type="evidence" value="ECO:0007669"/>
    <property type="project" value="UniProtKB-UniRule"/>
</dbReference>
<dbReference type="GO" id="GO:0006508">
    <property type="term" value="P:proteolysis"/>
    <property type="evidence" value="ECO:0007669"/>
    <property type="project" value="UniProtKB-KW"/>
</dbReference>
<dbReference type="FunFam" id="3.30.1380.10:FF:000002">
    <property type="entry name" value="Penicillin-insensitive murein endopeptidase"/>
    <property type="match status" value="1"/>
</dbReference>
<dbReference type="Gene3D" id="3.30.1380.10">
    <property type="match status" value="1"/>
</dbReference>
<dbReference type="HAMAP" id="MF_01623">
    <property type="entry name" value="MepA"/>
    <property type="match status" value="1"/>
</dbReference>
<dbReference type="InterPro" id="IPR009045">
    <property type="entry name" value="Hedgehog_sig/DD-Pept_Zn-bd_sf"/>
</dbReference>
<dbReference type="InterPro" id="IPR005073">
    <property type="entry name" value="Peptidase_M74"/>
</dbReference>
<dbReference type="NCBIfam" id="NF006947">
    <property type="entry name" value="PRK09429.1"/>
    <property type="match status" value="1"/>
</dbReference>
<dbReference type="Pfam" id="PF03411">
    <property type="entry name" value="Peptidase_M74"/>
    <property type="match status" value="1"/>
</dbReference>
<dbReference type="PIRSF" id="PIRSF018455">
    <property type="entry name" value="MepA"/>
    <property type="match status" value="1"/>
</dbReference>
<dbReference type="SUPFAM" id="SSF55166">
    <property type="entry name" value="Hedgehog/DD-peptidase"/>
    <property type="match status" value="1"/>
</dbReference>
<comment type="function">
    <text evidence="1">Murein endopeptidase that cleaves the D-alanyl-meso-2,6-diamino-pimelyl amide bond that connects peptidoglycan strands. Likely plays a role in the removal of murein from the sacculus.</text>
</comment>
<comment type="cofactor">
    <cofactor evidence="1">
        <name>Zn(2+)</name>
        <dbReference type="ChEBI" id="CHEBI:29105"/>
    </cofactor>
    <text evidence="1">Binds 2 Zn(2+) ions per subunit. Zn(2+) ion 1 is bound in the active site. Zn(2+) ion 2 is bound at the dimer interface by residues from both subunits.</text>
</comment>
<comment type="subunit">
    <text evidence="1">Dimer.</text>
</comment>
<comment type="subcellular location">
    <subcellularLocation>
        <location evidence="1">Periplasm</location>
    </subcellularLocation>
</comment>
<comment type="similarity">
    <text evidence="1">Belongs to the peptidase M74 family.</text>
</comment>
<evidence type="ECO:0000255" key="1">
    <source>
        <dbReference type="HAMAP-Rule" id="MF_01623"/>
    </source>
</evidence>
<evidence type="ECO:0000256" key="2">
    <source>
        <dbReference type="SAM" id="MobiDB-lite"/>
    </source>
</evidence>
<name>MEPA_SALEP</name>
<feature type="signal peptide" evidence="1">
    <location>
        <begin position="1"/>
        <end position="19"/>
    </location>
</feature>
<feature type="chain" id="PRO_5000397809" description="Penicillin-insensitive murein endopeptidase">
    <location>
        <begin position="20"/>
        <end position="274"/>
    </location>
</feature>
<feature type="region of interest" description="Disordered" evidence="2">
    <location>
        <begin position="225"/>
        <end position="274"/>
    </location>
</feature>
<feature type="binding site" evidence="1">
    <location>
        <position position="110"/>
    </location>
    <ligand>
        <name>Zn(2+)</name>
        <dbReference type="ChEBI" id="CHEBI:29105"/>
        <label>1</label>
    </ligand>
</feature>
<feature type="binding site" evidence="1">
    <location>
        <position position="113"/>
    </location>
    <ligand>
        <name>Zn(2+)</name>
        <dbReference type="ChEBI" id="CHEBI:29105"/>
        <label>1</label>
    </ligand>
</feature>
<feature type="binding site" evidence="1">
    <location>
        <position position="120"/>
    </location>
    <ligand>
        <name>Zn(2+)</name>
        <dbReference type="ChEBI" id="CHEBI:29105"/>
        <label>1</label>
    </ligand>
</feature>
<feature type="binding site" evidence="1">
    <location>
        <position position="147"/>
    </location>
    <ligand>
        <name>Zn(2+)</name>
        <dbReference type="ChEBI" id="CHEBI:29105"/>
        <label>2</label>
    </ligand>
</feature>
<feature type="binding site" evidence="1">
    <location>
        <position position="150"/>
    </location>
    <ligand>
        <name>Zn(2+)</name>
        <dbReference type="ChEBI" id="CHEBI:29105"/>
        <label>2</label>
    </ligand>
</feature>
<feature type="binding site" evidence="1">
    <location>
        <position position="211"/>
    </location>
    <ligand>
        <name>Zn(2+)</name>
        <dbReference type="ChEBI" id="CHEBI:29105"/>
        <label>1</label>
    </ligand>
</feature>
<feature type="disulfide bond" evidence="1">
    <location>
        <begin position="44"/>
        <end position="265"/>
    </location>
</feature>
<feature type="disulfide bond" evidence="1">
    <location>
        <begin position="187"/>
        <end position="235"/>
    </location>
</feature>
<feature type="disulfide bond" evidence="1">
    <location>
        <begin position="216"/>
        <end position="223"/>
    </location>
</feature>
<proteinExistence type="inferred from homology"/>
<gene>
    <name evidence="1" type="primary">mepA</name>
    <name type="ordered locus">SEN2365</name>
</gene>
<keyword id="KW-1015">Disulfide bond</keyword>
<keyword id="KW-0378">Hydrolase</keyword>
<keyword id="KW-0479">Metal-binding</keyword>
<keyword id="KW-0482">Metalloprotease</keyword>
<keyword id="KW-0574">Periplasm</keyword>
<keyword id="KW-0645">Protease</keyword>
<keyword id="KW-0732">Signal</keyword>
<keyword id="KW-0862">Zinc</keyword>
<reference key="1">
    <citation type="journal article" date="2008" name="Genome Res.">
        <title>Comparative genome analysis of Salmonella enteritidis PT4 and Salmonella gallinarum 287/91 provides insights into evolutionary and host adaptation pathways.</title>
        <authorList>
            <person name="Thomson N.R."/>
            <person name="Clayton D.J."/>
            <person name="Windhorst D."/>
            <person name="Vernikos G."/>
            <person name="Davidson S."/>
            <person name="Churcher C."/>
            <person name="Quail M.A."/>
            <person name="Stevens M."/>
            <person name="Jones M.A."/>
            <person name="Watson M."/>
            <person name="Barron A."/>
            <person name="Layton A."/>
            <person name="Pickard D."/>
            <person name="Kingsley R.A."/>
            <person name="Bignell A."/>
            <person name="Clark L."/>
            <person name="Harris B."/>
            <person name="Ormond D."/>
            <person name="Abdellah Z."/>
            <person name="Brooks K."/>
            <person name="Cherevach I."/>
            <person name="Chillingworth T."/>
            <person name="Woodward J."/>
            <person name="Norberczak H."/>
            <person name="Lord A."/>
            <person name="Arrowsmith C."/>
            <person name="Jagels K."/>
            <person name="Moule S."/>
            <person name="Mungall K."/>
            <person name="Saunders M."/>
            <person name="Whitehead S."/>
            <person name="Chabalgoity J.A."/>
            <person name="Maskell D."/>
            <person name="Humphreys T."/>
            <person name="Roberts M."/>
            <person name="Barrow P.A."/>
            <person name="Dougan G."/>
            <person name="Parkhill J."/>
        </authorList>
    </citation>
    <scope>NUCLEOTIDE SEQUENCE [LARGE SCALE GENOMIC DNA]</scope>
    <source>
        <strain>P125109</strain>
    </source>
</reference>
<organism>
    <name type="scientific">Salmonella enteritidis PT4 (strain P125109)</name>
    <dbReference type="NCBI Taxonomy" id="550537"/>
    <lineage>
        <taxon>Bacteria</taxon>
        <taxon>Pseudomonadati</taxon>
        <taxon>Pseudomonadota</taxon>
        <taxon>Gammaproteobacteria</taxon>
        <taxon>Enterobacterales</taxon>
        <taxon>Enterobacteriaceae</taxon>
        <taxon>Salmonella</taxon>
    </lineage>
</organism>